<accession>B4TEB5</accession>
<gene>
    <name evidence="1" type="primary">nrfA</name>
    <name type="ordered locus">SeHA_C4620</name>
</gene>
<sequence>MARKTLRARRFFSLIFPFFFITSVYAEQTPESAKTVTVEAKNEMFAPQHPDQYQSWKATSEQSAREDALAEDPRLVILWAGYPFSRDYNKPRGHAYAVTDVRETLRTGAPKTAEDGPLPMACWSCKSPDVARLIQQEGEDGYFHGKWARGGPEIVNDLGCADCHNTASDDFAQGKPALTLSRPYAERAMEAIGKPFDKAGRFDQQSMVCGQCHVEYYFDGKNKAVKFPWDEGMKVENMEQYYDAIAFSDWTNSLSKTPMLKAQHPEYETWSAGIHGKNNVTCIDCHMPKVQNAEGKLYTDHKIGNPFDNFAQTCANCHTQDKASLQKVVAERKQAIHDLKIKVEDQLVHAHFEAKAAWDAGATDAEMKPILNDIRHAQWRWDLAIASHGIHMHAPEEGLRMLGSAMDKAADARTKLARLLATKGITHEIPLPDISTKEKAQKAIGLNMQQINAEKQDFLKTVVPQWEDQARKNGLLSQ</sequence>
<feature type="signal peptide" evidence="1">
    <location>
        <begin position="1"/>
        <end position="26"/>
    </location>
</feature>
<feature type="chain" id="PRO_1000138219" description="Cytochrome c-552">
    <location>
        <begin position="27"/>
        <end position="478"/>
    </location>
</feature>
<feature type="binding site" description="axial binding residue" evidence="1">
    <location>
        <position position="94"/>
    </location>
    <ligand>
        <name>heme c</name>
        <dbReference type="ChEBI" id="CHEBI:61717"/>
        <label>3</label>
    </ligand>
    <ligandPart>
        <name>Fe</name>
        <dbReference type="ChEBI" id="CHEBI:18248"/>
    </ligandPart>
</feature>
<feature type="binding site" description="covalent" evidence="1">
    <location>
        <position position="122"/>
    </location>
    <ligand>
        <name>heme</name>
        <dbReference type="ChEBI" id="CHEBI:30413"/>
        <label>1</label>
    </ligand>
</feature>
<feature type="binding site" description="covalent" evidence="1">
    <location>
        <position position="125"/>
    </location>
    <ligand>
        <name>heme</name>
        <dbReference type="ChEBI" id="CHEBI:30413"/>
        <label>1</label>
    </ligand>
</feature>
<feature type="binding site" description="axial binding residue" evidence="1">
    <location>
        <position position="126"/>
    </location>
    <ligand>
        <name>heme</name>
        <dbReference type="ChEBI" id="CHEBI:30413"/>
        <label>1</label>
    </ligand>
    <ligandPart>
        <name>Fe</name>
        <dbReference type="ChEBI" id="CHEBI:18248"/>
    </ligandPart>
</feature>
<feature type="binding site" description="covalent" evidence="1">
    <location>
        <position position="160"/>
    </location>
    <ligand>
        <name>heme c</name>
        <dbReference type="ChEBI" id="CHEBI:61717"/>
        <label>2</label>
    </ligand>
</feature>
<feature type="binding site" description="covalent" evidence="1">
    <location>
        <position position="163"/>
    </location>
    <ligand>
        <name>heme c</name>
        <dbReference type="ChEBI" id="CHEBI:61717"/>
        <label>2</label>
    </ligand>
</feature>
<feature type="binding site" description="axial binding residue" evidence="1">
    <location>
        <position position="164"/>
    </location>
    <ligand>
        <name>heme c</name>
        <dbReference type="ChEBI" id="CHEBI:61717"/>
        <label>2</label>
    </ligand>
    <ligandPart>
        <name>Fe</name>
        <dbReference type="ChEBI" id="CHEBI:18248"/>
    </ligandPart>
</feature>
<feature type="binding site" description="covalent" evidence="1">
    <location>
        <position position="209"/>
    </location>
    <ligand>
        <name>heme c</name>
        <dbReference type="ChEBI" id="CHEBI:61717"/>
        <label>3</label>
    </ligand>
</feature>
<feature type="binding site" description="covalent" evidence="1">
    <location>
        <position position="212"/>
    </location>
    <ligand>
        <name>heme c</name>
        <dbReference type="ChEBI" id="CHEBI:61717"/>
        <label>3</label>
    </ligand>
</feature>
<feature type="binding site" description="axial binding residue" evidence="1">
    <location>
        <position position="213"/>
    </location>
    <ligand>
        <name>heme c</name>
        <dbReference type="ChEBI" id="CHEBI:61717"/>
        <label>3</label>
    </ligand>
    <ligandPart>
        <name>Fe</name>
        <dbReference type="ChEBI" id="CHEBI:18248"/>
    </ligandPart>
</feature>
<feature type="binding site" evidence="1">
    <location>
        <position position="215"/>
    </location>
    <ligand>
        <name>Ca(2+)</name>
        <dbReference type="ChEBI" id="CHEBI:29108"/>
    </ligand>
</feature>
<feature type="binding site" evidence="1">
    <location>
        <position position="216"/>
    </location>
    <ligand>
        <name>Ca(2+)</name>
        <dbReference type="ChEBI" id="CHEBI:29108"/>
    </ligand>
</feature>
<feature type="binding site" evidence="1">
    <location>
        <position position="216"/>
    </location>
    <ligand>
        <name>substrate</name>
    </ligand>
</feature>
<feature type="binding site" evidence="1">
    <location>
        <position position="261"/>
    </location>
    <ligand>
        <name>Ca(2+)</name>
        <dbReference type="ChEBI" id="CHEBI:29108"/>
    </ligand>
</feature>
<feature type="binding site" evidence="1">
    <location>
        <position position="263"/>
    </location>
    <ligand>
        <name>Ca(2+)</name>
        <dbReference type="ChEBI" id="CHEBI:29108"/>
    </ligand>
</feature>
<feature type="binding site" evidence="1">
    <location>
        <position position="264"/>
    </location>
    <ligand>
        <name>substrate</name>
    </ligand>
</feature>
<feature type="binding site" description="axial binding residue" evidence="1">
    <location>
        <position position="275"/>
    </location>
    <ligand>
        <name>heme c</name>
        <dbReference type="ChEBI" id="CHEBI:61717"/>
        <label>5</label>
    </ligand>
    <ligandPart>
        <name>Fe</name>
        <dbReference type="ChEBI" id="CHEBI:18248"/>
    </ligandPart>
</feature>
<feature type="binding site" description="covalent" evidence="1">
    <location>
        <position position="282"/>
    </location>
    <ligand>
        <name>heme c</name>
        <dbReference type="ChEBI" id="CHEBI:61717"/>
        <label>4</label>
    </ligand>
</feature>
<feature type="binding site" description="covalent" evidence="1">
    <location>
        <position position="285"/>
    </location>
    <ligand>
        <name>heme c</name>
        <dbReference type="ChEBI" id="CHEBI:61717"/>
        <label>4</label>
    </ligand>
</feature>
<feature type="binding site" description="axial binding residue" evidence="1">
    <location>
        <position position="286"/>
    </location>
    <ligand>
        <name>heme c</name>
        <dbReference type="ChEBI" id="CHEBI:61717"/>
        <label>4</label>
    </ligand>
    <ligandPart>
        <name>Fe</name>
        <dbReference type="ChEBI" id="CHEBI:18248"/>
    </ligandPart>
</feature>
<feature type="binding site" description="axial binding residue" evidence="1">
    <location>
        <position position="301"/>
    </location>
    <ligand>
        <name>heme c</name>
        <dbReference type="ChEBI" id="CHEBI:61717"/>
        <label>2</label>
    </ligand>
    <ligandPart>
        <name>Fe</name>
        <dbReference type="ChEBI" id="CHEBI:18248"/>
    </ligandPart>
</feature>
<feature type="binding site" description="covalent" evidence="1">
    <location>
        <position position="314"/>
    </location>
    <ligand>
        <name>heme c</name>
        <dbReference type="ChEBI" id="CHEBI:61717"/>
        <label>5</label>
    </ligand>
</feature>
<feature type="binding site" description="covalent" evidence="1">
    <location>
        <position position="317"/>
    </location>
    <ligand>
        <name>heme c</name>
        <dbReference type="ChEBI" id="CHEBI:61717"/>
        <label>5</label>
    </ligand>
</feature>
<feature type="binding site" description="axial binding residue" evidence="1">
    <location>
        <position position="318"/>
    </location>
    <ligand>
        <name>heme c</name>
        <dbReference type="ChEBI" id="CHEBI:61717"/>
        <label>5</label>
    </ligand>
    <ligandPart>
        <name>Fe</name>
        <dbReference type="ChEBI" id="CHEBI:18248"/>
    </ligandPart>
</feature>
<feature type="binding site" description="axial binding residue" evidence="1">
    <location>
        <position position="393"/>
    </location>
    <ligand>
        <name>heme c</name>
        <dbReference type="ChEBI" id="CHEBI:61717"/>
        <label>4</label>
    </ligand>
    <ligandPart>
        <name>Fe</name>
        <dbReference type="ChEBI" id="CHEBI:18248"/>
    </ligandPart>
</feature>
<organism>
    <name type="scientific">Salmonella heidelberg (strain SL476)</name>
    <dbReference type="NCBI Taxonomy" id="454169"/>
    <lineage>
        <taxon>Bacteria</taxon>
        <taxon>Pseudomonadati</taxon>
        <taxon>Pseudomonadota</taxon>
        <taxon>Gammaproteobacteria</taxon>
        <taxon>Enterobacterales</taxon>
        <taxon>Enterobacteriaceae</taxon>
        <taxon>Salmonella</taxon>
    </lineage>
</organism>
<evidence type="ECO:0000255" key="1">
    <source>
        <dbReference type="HAMAP-Rule" id="MF_01182"/>
    </source>
</evidence>
<name>NRFA_SALHS</name>
<dbReference type="EC" id="1.7.2.2" evidence="1"/>
<dbReference type="EMBL" id="CP001120">
    <property type="protein sequence ID" value="ACF69651.1"/>
    <property type="molecule type" value="Genomic_DNA"/>
</dbReference>
<dbReference type="RefSeq" id="WP_000101770.1">
    <property type="nucleotide sequence ID" value="NC_011083.1"/>
</dbReference>
<dbReference type="SMR" id="B4TEB5"/>
<dbReference type="KEGG" id="seh:SeHA_C4620"/>
<dbReference type="HOGENOM" id="CLU_035040_1_0_6"/>
<dbReference type="UniPathway" id="UPA00653"/>
<dbReference type="Proteomes" id="UP000001866">
    <property type="component" value="Chromosome"/>
</dbReference>
<dbReference type="GO" id="GO:0030288">
    <property type="term" value="C:outer membrane-bounded periplasmic space"/>
    <property type="evidence" value="ECO:0007669"/>
    <property type="project" value="TreeGrafter"/>
</dbReference>
<dbReference type="GO" id="GO:0005509">
    <property type="term" value="F:calcium ion binding"/>
    <property type="evidence" value="ECO:0007669"/>
    <property type="project" value="UniProtKB-UniRule"/>
</dbReference>
<dbReference type="GO" id="GO:0020037">
    <property type="term" value="F:heme binding"/>
    <property type="evidence" value="ECO:0007669"/>
    <property type="project" value="InterPro"/>
</dbReference>
<dbReference type="GO" id="GO:0005506">
    <property type="term" value="F:iron ion binding"/>
    <property type="evidence" value="ECO:0007669"/>
    <property type="project" value="UniProtKB-UniRule"/>
</dbReference>
<dbReference type="GO" id="GO:0042279">
    <property type="term" value="F:nitrite reductase (cytochrome, ammonia-forming) activity"/>
    <property type="evidence" value="ECO:0007669"/>
    <property type="project" value="UniProtKB-UniRule"/>
</dbReference>
<dbReference type="GO" id="GO:0019645">
    <property type="term" value="P:anaerobic electron transport chain"/>
    <property type="evidence" value="ECO:0007669"/>
    <property type="project" value="TreeGrafter"/>
</dbReference>
<dbReference type="GO" id="GO:0042128">
    <property type="term" value="P:nitrate assimilation"/>
    <property type="evidence" value="ECO:0007669"/>
    <property type="project" value="UniProtKB-UniRule"/>
</dbReference>
<dbReference type="CDD" id="cd00548">
    <property type="entry name" value="NrfA-like"/>
    <property type="match status" value="1"/>
</dbReference>
<dbReference type="FunFam" id="1.10.1130.10:FF:000002">
    <property type="entry name" value="Cytochrome c-552"/>
    <property type="match status" value="1"/>
</dbReference>
<dbReference type="FunFam" id="1.20.140.10:FF:000014">
    <property type="entry name" value="Cytochrome c-552"/>
    <property type="match status" value="1"/>
</dbReference>
<dbReference type="Gene3D" id="1.20.140.10">
    <property type="entry name" value="Butyryl-CoA Dehydrogenase, subunit A, domain 3"/>
    <property type="match status" value="1"/>
</dbReference>
<dbReference type="Gene3D" id="1.10.1130.10">
    <property type="entry name" value="Flavocytochrome C3, Chain A"/>
    <property type="match status" value="1"/>
</dbReference>
<dbReference type="HAMAP" id="MF_01182">
    <property type="entry name" value="Cytochrom_C552"/>
    <property type="match status" value="1"/>
</dbReference>
<dbReference type="InterPro" id="IPR003321">
    <property type="entry name" value="Cyt_c552"/>
</dbReference>
<dbReference type="InterPro" id="IPR017570">
    <property type="entry name" value="Cyt_c_NO2Rdtase_formate-dep"/>
</dbReference>
<dbReference type="InterPro" id="IPR036280">
    <property type="entry name" value="Multihaem_cyt_sf"/>
</dbReference>
<dbReference type="NCBIfam" id="TIGR03152">
    <property type="entry name" value="cyto_c552_HCOOH"/>
    <property type="match status" value="1"/>
</dbReference>
<dbReference type="NCBIfam" id="NF008339">
    <property type="entry name" value="PRK11125.1"/>
    <property type="match status" value="1"/>
</dbReference>
<dbReference type="PANTHER" id="PTHR30633:SF0">
    <property type="entry name" value="CYTOCHROME C-552"/>
    <property type="match status" value="1"/>
</dbReference>
<dbReference type="PANTHER" id="PTHR30633">
    <property type="entry name" value="CYTOCHROME C-552 RESPIRATORY NITRITE REDUCTASE"/>
    <property type="match status" value="1"/>
</dbReference>
<dbReference type="Pfam" id="PF02335">
    <property type="entry name" value="Cytochrom_C552"/>
    <property type="match status" value="1"/>
</dbReference>
<dbReference type="PIRSF" id="PIRSF000243">
    <property type="entry name" value="Cyt_c552"/>
    <property type="match status" value="1"/>
</dbReference>
<dbReference type="SUPFAM" id="SSF48695">
    <property type="entry name" value="Multiheme cytochromes"/>
    <property type="match status" value="1"/>
</dbReference>
<dbReference type="PROSITE" id="PS51008">
    <property type="entry name" value="MULTIHEME_CYTC"/>
    <property type="match status" value="1"/>
</dbReference>
<comment type="function">
    <text evidence="1">Catalyzes the reduction of nitrite to ammonia, consuming six electrons in the process.</text>
</comment>
<comment type="catalytic activity">
    <reaction evidence="1">
        <text>6 Fe(III)-[cytochrome c] + NH4(+) + 2 H2O = 6 Fe(II)-[cytochrome c] + nitrite + 8 H(+)</text>
        <dbReference type="Rhea" id="RHEA:13089"/>
        <dbReference type="Rhea" id="RHEA-COMP:10350"/>
        <dbReference type="Rhea" id="RHEA-COMP:14399"/>
        <dbReference type="ChEBI" id="CHEBI:15377"/>
        <dbReference type="ChEBI" id="CHEBI:15378"/>
        <dbReference type="ChEBI" id="CHEBI:16301"/>
        <dbReference type="ChEBI" id="CHEBI:28938"/>
        <dbReference type="ChEBI" id="CHEBI:29033"/>
        <dbReference type="ChEBI" id="CHEBI:29034"/>
        <dbReference type="EC" id="1.7.2.2"/>
    </reaction>
</comment>
<comment type="cofactor">
    <cofactor evidence="1">
        <name>Ca(2+)</name>
        <dbReference type="ChEBI" id="CHEBI:29108"/>
    </cofactor>
    <text evidence="1">Binds 1 Ca(2+) ion per monomer.</text>
</comment>
<comment type="cofactor">
    <cofactor evidence="1">
        <name>heme c</name>
        <dbReference type="ChEBI" id="CHEBI:61717"/>
    </cofactor>
    <text evidence="1">Binds 5 heme c groups covalently per monomer.</text>
</comment>
<comment type="pathway">
    <text evidence="1">Nitrogen metabolism; nitrate reduction (assimilation).</text>
</comment>
<comment type="subcellular location">
    <subcellularLocation>
        <location evidence="1">Periplasm</location>
    </subcellularLocation>
</comment>
<comment type="similarity">
    <text evidence="1">Belongs to the cytochrome c-552 family.</text>
</comment>
<protein>
    <recommendedName>
        <fullName evidence="1">Cytochrome c-552</fullName>
        <ecNumber evidence="1">1.7.2.2</ecNumber>
    </recommendedName>
    <alternativeName>
        <fullName evidence="1">Ammonia-forming cytochrome c nitrite reductase</fullName>
        <shortName evidence="1">Cytochrome c nitrite reductase</shortName>
    </alternativeName>
</protein>
<keyword id="KW-0106">Calcium</keyword>
<keyword id="KW-0249">Electron transport</keyword>
<keyword id="KW-0349">Heme</keyword>
<keyword id="KW-0408">Iron</keyword>
<keyword id="KW-0479">Metal-binding</keyword>
<keyword id="KW-0560">Oxidoreductase</keyword>
<keyword id="KW-0574">Periplasm</keyword>
<keyword id="KW-0732">Signal</keyword>
<keyword id="KW-0813">Transport</keyword>
<reference key="1">
    <citation type="journal article" date="2011" name="J. Bacteriol.">
        <title>Comparative genomics of 28 Salmonella enterica isolates: evidence for CRISPR-mediated adaptive sublineage evolution.</title>
        <authorList>
            <person name="Fricke W.F."/>
            <person name="Mammel M.K."/>
            <person name="McDermott P.F."/>
            <person name="Tartera C."/>
            <person name="White D.G."/>
            <person name="Leclerc J.E."/>
            <person name="Ravel J."/>
            <person name="Cebula T.A."/>
        </authorList>
    </citation>
    <scope>NUCLEOTIDE SEQUENCE [LARGE SCALE GENOMIC DNA]</scope>
    <source>
        <strain>SL476</strain>
    </source>
</reference>
<proteinExistence type="inferred from homology"/>